<feature type="chain" id="PRO_0000410989" description="UDP-arabinopyranose mutase 1">
    <location>
        <begin position="1"/>
        <end position="364"/>
    </location>
</feature>
<feature type="short sequence motif" description="DXD motif" evidence="5">
    <location>
        <begin position="110"/>
        <end position="112"/>
    </location>
</feature>
<feature type="site" description="Required for activity" evidence="5">
    <location>
        <position position="158"/>
    </location>
</feature>
<feature type="site" description="Required for activity" evidence="5">
    <location>
        <position position="165"/>
    </location>
</feature>
<feature type="glycosylation site" description="N-linked (Glc...) arginine" evidence="5">
    <location>
        <position position="158"/>
    </location>
</feature>
<feature type="mutagenesis site" description="Loss of activity." evidence="5">
    <original>D</original>
    <variation>N</variation>
    <location>
        <position position="112"/>
    </location>
</feature>
<feature type="mutagenesis site" description="No effect on the activity." evidence="5">
    <original>R</original>
    <variation>A</variation>
    <location>
        <position position="151"/>
    </location>
</feature>
<feature type="mutagenesis site" description="Loss of activity." evidence="5">
    <original>R</original>
    <variation>A</variation>
    <location>
        <position position="158"/>
    </location>
</feature>
<feature type="mutagenesis site" description="Decreases activity 20-fold." evidence="5">
    <original>R</original>
    <variation>A</variation>
    <variation>K</variation>
    <location>
        <position position="165"/>
    </location>
</feature>
<feature type="sequence conflict" description="In Ref. 2; CAA09469." evidence="7" ref="2">
    <original>A</original>
    <variation>G</variation>
    <location>
        <position position="83"/>
    </location>
</feature>
<evidence type="ECO:0000250" key="1">
    <source>
        <dbReference type="UniProtKB" id="Q9SRT9"/>
    </source>
</evidence>
<evidence type="ECO:0000269" key="2">
    <source>
    </source>
</evidence>
<evidence type="ECO:0000269" key="3">
    <source>
    </source>
</evidence>
<evidence type="ECO:0000269" key="4">
    <source>
    </source>
</evidence>
<evidence type="ECO:0000269" key="5">
    <source>
    </source>
</evidence>
<evidence type="ECO:0000303" key="6">
    <source>
    </source>
</evidence>
<evidence type="ECO:0000305" key="7"/>
<evidence type="ECO:0000312" key="8">
    <source>
        <dbReference type="EMBL" id="AAN08217.1"/>
    </source>
</evidence>
<evidence type="ECO:0000312" key="9">
    <source>
        <dbReference type="EMBL" id="ABF97476.1"/>
    </source>
</evidence>
<evidence type="ECO:0000312" key="10">
    <source>
        <dbReference type="EMBL" id="BAS85190.1"/>
    </source>
</evidence>
<evidence type="ECO:0000312" key="11">
    <source>
        <dbReference type="EMBL" id="EEE59464.1"/>
    </source>
</evidence>
<dbReference type="EC" id="5.4.99.30" evidence="3 4 5"/>
<dbReference type="EMBL" id="AF294725">
    <property type="protein sequence ID" value="AAG17438.1"/>
    <property type="molecule type" value="mRNA"/>
</dbReference>
<dbReference type="EMBL" id="AJ011078">
    <property type="protein sequence ID" value="CAA09469.1"/>
    <property type="status" value="ALT_FRAME"/>
    <property type="molecule type" value="mRNA"/>
</dbReference>
<dbReference type="EMBL" id="EU267966">
    <property type="protein sequence ID" value="ACA50488.1"/>
    <property type="molecule type" value="mRNA"/>
</dbReference>
<dbReference type="EMBL" id="GQ848047">
    <property type="protein sequence ID" value="ADM86860.1"/>
    <property type="molecule type" value="mRNA"/>
</dbReference>
<dbReference type="EMBL" id="AC090874">
    <property type="protein sequence ID" value="AAN08217.1"/>
    <property type="molecule type" value="Genomic_DNA"/>
</dbReference>
<dbReference type="EMBL" id="DP000009">
    <property type="protein sequence ID" value="ABF97476.1"/>
    <property type="molecule type" value="Genomic_DNA"/>
</dbReference>
<dbReference type="EMBL" id="DP000009">
    <property type="protein sequence ID" value="ABF97477.1"/>
    <property type="status" value="ALT_INIT"/>
    <property type="molecule type" value="Genomic_DNA"/>
</dbReference>
<dbReference type="EMBL" id="AP008209">
    <property type="protein sequence ID" value="BAF12531.1"/>
    <property type="molecule type" value="Genomic_DNA"/>
</dbReference>
<dbReference type="EMBL" id="AP014959">
    <property type="protein sequence ID" value="BAS85190.1"/>
    <property type="molecule type" value="Genomic_DNA"/>
</dbReference>
<dbReference type="EMBL" id="CM000140">
    <property type="protein sequence ID" value="EEE59464.1"/>
    <property type="molecule type" value="Genomic_DNA"/>
</dbReference>
<dbReference type="EMBL" id="AK061813">
    <property type="protein sequence ID" value="BAG88123.1"/>
    <property type="molecule type" value="mRNA"/>
</dbReference>
<dbReference type="EMBL" id="AK098933">
    <property type="protein sequence ID" value="BAG93819.1"/>
    <property type="molecule type" value="mRNA"/>
</dbReference>
<dbReference type="RefSeq" id="XP_015631326.1">
    <property type="nucleotide sequence ID" value="XM_015775840.1"/>
</dbReference>
<dbReference type="SMR" id="Q8H8T0"/>
<dbReference type="BioGRID" id="802430">
    <property type="interactions" value="1"/>
</dbReference>
<dbReference type="FunCoup" id="Q8H8T0">
    <property type="interactions" value="1119"/>
</dbReference>
<dbReference type="STRING" id="39947.Q8H8T0"/>
<dbReference type="CAZy" id="GT75">
    <property type="family name" value="Glycosyltransferase Family 75"/>
</dbReference>
<dbReference type="GlyCosmos" id="Q8H8T0">
    <property type="glycosylation" value="1 site, No reported glycans"/>
</dbReference>
<dbReference type="PaxDb" id="39947-Q8H8T0"/>
<dbReference type="EnsemblPlants" id="Os03t0599800-01">
    <property type="protein sequence ID" value="Os03t0599800-01"/>
    <property type="gene ID" value="Os03g0599800"/>
</dbReference>
<dbReference type="Gramene" id="Os03t0599800-01">
    <property type="protein sequence ID" value="Os03t0599800-01"/>
    <property type="gene ID" value="Os03g0599800"/>
</dbReference>
<dbReference type="KEGG" id="dosa:Os03g0599800"/>
<dbReference type="eggNOG" id="ENOG502QSDP">
    <property type="taxonomic scope" value="Eukaryota"/>
</dbReference>
<dbReference type="HOGENOM" id="CLU_061976_0_0_1"/>
<dbReference type="InParanoid" id="Q8H8T0"/>
<dbReference type="OMA" id="AMATWID"/>
<dbReference type="OrthoDB" id="1020896at2759"/>
<dbReference type="BioCyc" id="MetaCyc:MONOMER-15774"/>
<dbReference type="BRENDA" id="5.4.99.30">
    <property type="organism ID" value="4460"/>
</dbReference>
<dbReference type="PlantReactome" id="R-OSA-1119574">
    <property type="pathway name" value="UDP-L-arabinose biosynthesis and transport"/>
</dbReference>
<dbReference type="Proteomes" id="UP000000763">
    <property type="component" value="Chromosome 3"/>
</dbReference>
<dbReference type="Proteomes" id="UP000007752">
    <property type="component" value="Chromosome 3"/>
</dbReference>
<dbReference type="Proteomes" id="UP000059680">
    <property type="component" value="Chromosome 3"/>
</dbReference>
<dbReference type="ExpressionAtlas" id="Q8H8T0">
    <property type="expression patterns" value="baseline and differential"/>
</dbReference>
<dbReference type="GO" id="GO:0005829">
    <property type="term" value="C:cytosol"/>
    <property type="evidence" value="ECO:0000318"/>
    <property type="project" value="GO_Central"/>
</dbReference>
<dbReference type="GO" id="GO:0005794">
    <property type="term" value="C:Golgi apparatus"/>
    <property type="evidence" value="ECO:0000318"/>
    <property type="project" value="GO_Central"/>
</dbReference>
<dbReference type="GO" id="GO:0016866">
    <property type="term" value="F:intramolecular transferase activity"/>
    <property type="evidence" value="ECO:0000314"/>
    <property type="project" value="UniProtKB"/>
</dbReference>
<dbReference type="GO" id="GO:0052691">
    <property type="term" value="F:UDP-arabinopyranose mutase activity"/>
    <property type="evidence" value="ECO:0000318"/>
    <property type="project" value="GO_Central"/>
</dbReference>
<dbReference type="GO" id="GO:0071555">
    <property type="term" value="P:cell wall organization"/>
    <property type="evidence" value="ECO:0007669"/>
    <property type="project" value="UniProtKB-KW"/>
</dbReference>
<dbReference type="GO" id="GO:0071669">
    <property type="term" value="P:plant-type cell wall organization or biogenesis"/>
    <property type="evidence" value="ECO:0000318"/>
    <property type="project" value="GO_Central"/>
</dbReference>
<dbReference type="GO" id="GO:0033356">
    <property type="term" value="P:UDP-L-arabinose metabolic process"/>
    <property type="evidence" value="ECO:0000318"/>
    <property type="project" value="GO_Central"/>
</dbReference>
<dbReference type="InterPro" id="IPR029044">
    <property type="entry name" value="Nucleotide-diphossugar_trans"/>
</dbReference>
<dbReference type="InterPro" id="IPR004901">
    <property type="entry name" value="RGP"/>
</dbReference>
<dbReference type="InterPro" id="IPR037595">
    <property type="entry name" value="RGP_fam"/>
</dbReference>
<dbReference type="PANTHER" id="PTHR31682:SF46">
    <property type="entry name" value="UDP-ARABINOPYRANOSE MUTASE 1"/>
    <property type="match status" value="1"/>
</dbReference>
<dbReference type="PANTHER" id="PTHR31682">
    <property type="entry name" value="UDP-ARABINOSE MUTASE"/>
    <property type="match status" value="1"/>
</dbReference>
<dbReference type="Pfam" id="PF03214">
    <property type="entry name" value="RGP"/>
    <property type="match status" value="1"/>
</dbReference>
<dbReference type="PIRSF" id="PIRSF016429">
    <property type="entry name" value="UPTG"/>
    <property type="match status" value="1"/>
</dbReference>
<dbReference type="SUPFAM" id="SSF53448">
    <property type="entry name" value="Nucleotide-diphospho-sugar transferases"/>
    <property type="match status" value="1"/>
</dbReference>
<gene>
    <name evidence="6" type="primary">UAM1</name>
    <name evidence="6" type="synonym">RGP1</name>
    <name evidence="10" type="ordered locus">Os03g0599800</name>
    <name evidence="9" type="ordered locus">LOC_Os03g40270</name>
    <name evidence="8" type="ORF">OJ1523_A02.1</name>
    <name evidence="11" type="ORF">OsJ_11657</name>
</gene>
<protein>
    <recommendedName>
        <fullName evidence="6">UDP-arabinopyranose mutase 1</fullName>
        <shortName evidence="6">OsUAM1</shortName>
        <ecNumber evidence="3 4 5">5.4.99.30</ecNumber>
    </recommendedName>
    <alternativeName>
        <fullName evidence="6">Reversibly glycosylated polypeptide 1</fullName>
    </alternativeName>
    <alternativeName>
        <fullName evidence="7">UDP-L-arabinose mutase 1</fullName>
    </alternativeName>
</protein>
<proteinExistence type="evidence at protein level"/>
<comment type="function">
    <text evidence="2 3 4 5">UDP-L-arabinose mutase involved in the biosynthesis of cell wall non-cellulosic polysaccharides. Catalyzes the interconvertion of UDP-L-arabinopyranose (UDP-Arap) and UDP-L-arabinofuranose (UDP-Araf). Preferentially catalyzes the formation of UDP-Arap from UDP-Araf. At thermodynamic equilibrium in vitro the ratio of the pyranose form over the furanose form is 90:10. Is probably active as heteromer in vivo.</text>
</comment>
<comment type="catalytic activity">
    <reaction evidence="3 4 5">
        <text>UDP-beta-L-arabinofuranose = UDP-beta-L-arabinopyranose</text>
        <dbReference type="Rhea" id="RHEA:28350"/>
        <dbReference type="ChEBI" id="CHEBI:61457"/>
        <dbReference type="ChEBI" id="CHEBI:61463"/>
        <dbReference type="EC" id="5.4.99.30"/>
    </reaction>
</comment>
<comment type="cofactor">
    <cofactor evidence="3">
        <name>Mn(2+)</name>
        <dbReference type="ChEBI" id="CHEBI:29035"/>
    </cofactor>
    <cofactor evidence="3">
        <name>Mg(2+)</name>
        <dbReference type="ChEBI" id="CHEBI:18420"/>
    </cofactor>
</comment>
<comment type="biophysicochemical properties">
    <kinetics>
        <KM evidence="4">22.8 uM for UDP-L-arabinofuranose</KM>
        <KM evidence="4">45.4 uM for UDP-L-arabinopyranose</KM>
        <Vmax evidence="4">0.688 umol/min/mg enzyme with UDP-L-arabinofuranose as substrate</Vmax>
        <Vmax evidence="4">0.269 umol/min/mg enzyme with UDP-L-arabinofuranose as substrate</Vmax>
    </kinetics>
    <phDependence>
        <text evidence="4">Optimum pH is 5.5-6.0.</text>
    </phDependence>
</comment>
<comment type="subunit">
    <text evidence="2 3">Heteromers with UAM2 and UAM3.</text>
</comment>
<comment type="subcellular location">
    <subcellularLocation>
        <location evidence="1">Golgi apparatus</location>
    </subcellularLocation>
</comment>
<comment type="domain">
    <text evidence="5">The conserved DXD motif is involved in enzyme activity.</text>
</comment>
<comment type="PTM">
    <text evidence="2 3 5">Reversibly glycosylated in vitro at Arg-158 by UDP-glucose. Reversibly glycosylated by UDP-xylose and UDP-galactose.</text>
</comment>
<comment type="similarity">
    <text evidence="7">Belongs to the RGP family.</text>
</comment>
<comment type="sequence caution" evidence="7">
    <conflict type="erroneous initiation">
        <sequence resource="EMBL-CDS" id="ABF97477"/>
    </conflict>
    <text>Truncated N-terminus.</text>
</comment>
<comment type="sequence caution" evidence="7">
    <conflict type="frameshift">
        <sequence resource="EMBL-CDS" id="CAA09469"/>
    </conflict>
</comment>
<reference key="1">
    <citation type="journal article" date="2000" name="J. Plant Biochem. Biotechnol.">
        <title>PCR-Amplification and cloning of the coding region of a cDNA for a reversibly glycosylated polypeptide from rice with possible involvement in the biosynthesis of glucans.</title>
        <authorList>
            <person name="Gupta P."/>
            <person name="Raghuvanshi S."/>
            <person name="Tyagi A.K."/>
        </authorList>
    </citation>
    <scope>NUCLEOTIDE SEQUENCE [MRNA]</scope>
</reference>
<reference key="2">
    <citation type="submission" date="1998-09" db="EMBL/GenBank/DDBJ databases">
        <title>Characterization of reverse glycosylating proteins 1 and 2 of Oryza sativa.</title>
        <authorList>
            <person name="Bligh H.F."/>
            <person name="Jackson D.A."/>
        </authorList>
    </citation>
    <scope>NUCLEOTIDE SEQUENCE [MRNA]</scope>
    <source>
        <strain>cv. Lemont</strain>
    </source>
</reference>
<reference key="3">
    <citation type="submission" date="2007-11" db="EMBL/GenBank/DDBJ databases">
        <title>Molecular cloning of the alpha-1,4-glucan protein synthase genes in rice.</title>
        <authorList>
            <person name="Yoon U.H."/>
            <person name="Kim Y.H."/>
        </authorList>
    </citation>
    <scope>NUCLEOTIDE SEQUENCE [MRNA]</scope>
    <source>
        <strain>cv. Ilpoombyeo</strain>
        <tissue>Seedling</tissue>
    </source>
</reference>
<reference key="4">
    <citation type="submission" date="2009-08" db="EMBL/GenBank/DDBJ databases">
        <title>Structural and expression analysis of germinating seed genes in Oryza sativa L.</title>
        <authorList>
            <person name="Yoon U.H."/>
            <person name="Kim Y.H."/>
        </authorList>
    </citation>
    <scope>NUCLEOTIDE SEQUENCE [MRNA]</scope>
    <source>
        <strain>cv. Ilpoombyeo</strain>
        <tissue>Seedling</tissue>
    </source>
</reference>
<reference key="5">
    <citation type="journal article" date="2005" name="Genome Res.">
        <title>Sequence, annotation, and analysis of synteny between rice chromosome 3 and diverged grass species.</title>
        <authorList>
            <consortium name="The rice chromosome 3 sequencing consortium"/>
            <person name="Buell C.R."/>
            <person name="Yuan Q."/>
            <person name="Ouyang S."/>
            <person name="Liu J."/>
            <person name="Zhu W."/>
            <person name="Wang A."/>
            <person name="Maiti R."/>
            <person name="Haas B."/>
            <person name="Wortman J."/>
            <person name="Pertea M."/>
            <person name="Jones K.M."/>
            <person name="Kim M."/>
            <person name="Overton L."/>
            <person name="Tsitrin T."/>
            <person name="Fadrosh D."/>
            <person name="Bera J."/>
            <person name="Weaver B."/>
            <person name="Jin S."/>
            <person name="Johri S."/>
            <person name="Reardon M."/>
            <person name="Webb K."/>
            <person name="Hill J."/>
            <person name="Moffat K."/>
            <person name="Tallon L."/>
            <person name="Van Aken S."/>
            <person name="Lewis M."/>
            <person name="Utterback T."/>
            <person name="Feldblyum T."/>
            <person name="Zismann V."/>
            <person name="Iobst S."/>
            <person name="Hsiao J."/>
            <person name="de Vazeille A.R."/>
            <person name="Salzberg S.L."/>
            <person name="White O."/>
            <person name="Fraser C.M."/>
            <person name="Yu Y."/>
            <person name="Kim H."/>
            <person name="Rambo T."/>
            <person name="Currie J."/>
            <person name="Collura K."/>
            <person name="Kernodle-Thompson S."/>
            <person name="Wei F."/>
            <person name="Kudrna K."/>
            <person name="Ammiraju J.S.S."/>
            <person name="Luo M."/>
            <person name="Goicoechea J.L."/>
            <person name="Wing R.A."/>
            <person name="Henry D."/>
            <person name="Oates R."/>
            <person name="Palmer M."/>
            <person name="Pries G."/>
            <person name="Saski C."/>
            <person name="Simmons J."/>
            <person name="Soderlund C."/>
            <person name="Nelson W."/>
            <person name="de la Bastide M."/>
            <person name="Spiegel L."/>
            <person name="Nascimento L."/>
            <person name="Huang E."/>
            <person name="Preston R."/>
            <person name="Zutavern T."/>
            <person name="Palmer L."/>
            <person name="O'Shaughnessy A."/>
            <person name="Dike S."/>
            <person name="McCombie W.R."/>
            <person name="Minx P."/>
            <person name="Cordum H."/>
            <person name="Wilson R."/>
            <person name="Jin W."/>
            <person name="Lee H.R."/>
            <person name="Jiang J."/>
            <person name="Jackson S."/>
        </authorList>
    </citation>
    <scope>NUCLEOTIDE SEQUENCE [LARGE SCALE GENOMIC DNA]</scope>
    <source>
        <strain>cv. Nipponbare</strain>
    </source>
</reference>
<reference key="6">
    <citation type="journal article" date="2005" name="Nature">
        <title>The map-based sequence of the rice genome.</title>
        <authorList>
            <consortium name="International rice genome sequencing project (IRGSP)"/>
        </authorList>
    </citation>
    <scope>NUCLEOTIDE SEQUENCE [LARGE SCALE GENOMIC DNA]</scope>
    <source>
        <strain>cv. Nipponbare</strain>
    </source>
</reference>
<reference key="7">
    <citation type="journal article" date="2008" name="Nucleic Acids Res.">
        <title>The rice annotation project database (RAP-DB): 2008 update.</title>
        <authorList>
            <consortium name="The rice annotation project (RAP)"/>
        </authorList>
    </citation>
    <scope>GENOME REANNOTATION</scope>
    <source>
        <strain>cv. Nipponbare</strain>
    </source>
</reference>
<reference key="8">
    <citation type="journal article" date="2013" name="Rice">
        <title>Improvement of the Oryza sativa Nipponbare reference genome using next generation sequence and optical map data.</title>
        <authorList>
            <person name="Kawahara Y."/>
            <person name="de la Bastide M."/>
            <person name="Hamilton J.P."/>
            <person name="Kanamori H."/>
            <person name="McCombie W.R."/>
            <person name="Ouyang S."/>
            <person name="Schwartz D.C."/>
            <person name="Tanaka T."/>
            <person name="Wu J."/>
            <person name="Zhou S."/>
            <person name="Childs K.L."/>
            <person name="Davidson R.M."/>
            <person name="Lin H."/>
            <person name="Quesada-Ocampo L."/>
            <person name="Vaillancourt B."/>
            <person name="Sakai H."/>
            <person name="Lee S.S."/>
            <person name="Kim J."/>
            <person name="Numa H."/>
            <person name="Itoh T."/>
            <person name="Buell C.R."/>
            <person name="Matsumoto T."/>
        </authorList>
    </citation>
    <scope>GENOME REANNOTATION</scope>
    <source>
        <strain>cv. Nipponbare</strain>
    </source>
</reference>
<reference key="9">
    <citation type="journal article" date="2005" name="PLoS Biol.">
        <title>The genomes of Oryza sativa: a history of duplications.</title>
        <authorList>
            <person name="Yu J."/>
            <person name="Wang J."/>
            <person name="Lin W."/>
            <person name="Li S."/>
            <person name="Li H."/>
            <person name="Zhou J."/>
            <person name="Ni P."/>
            <person name="Dong W."/>
            <person name="Hu S."/>
            <person name="Zeng C."/>
            <person name="Zhang J."/>
            <person name="Zhang Y."/>
            <person name="Li R."/>
            <person name="Xu Z."/>
            <person name="Li S."/>
            <person name="Li X."/>
            <person name="Zheng H."/>
            <person name="Cong L."/>
            <person name="Lin L."/>
            <person name="Yin J."/>
            <person name="Geng J."/>
            <person name="Li G."/>
            <person name="Shi J."/>
            <person name="Liu J."/>
            <person name="Lv H."/>
            <person name="Li J."/>
            <person name="Wang J."/>
            <person name="Deng Y."/>
            <person name="Ran L."/>
            <person name="Shi X."/>
            <person name="Wang X."/>
            <person name="Wu Q."/>
            <person name="Li C."/>
            <person name="Ren X."/>
            <person name="Wang J."/>
            <person name="Wang X."/>
            <person name="Li D."/>
            <person name="Liu D."/>
            <person name="Zhang X."/>
            <person name="Ji Z."/>
            <person name="Zhao W."/>
            <person name="Sun Y."/>
            <person name="Zhang Z."/>
            <person name="Bao J."/>
            <person name="Han Y."/>
            <person name="Dong L."/>
            <person name="Ji J."/>
            <person name="Chen P."/>
            <person name="Wu S."/>
            <person name="Liu J."/>
            <person name="Xiao Y."/>
            <person name="Bu D."/>
            <person name="Tan J."/>
            <person name="Yang L."/>
            <person name="Ye C."/>
            <person name="Zhang J."/>
            <person name="Xu J."/>
            <person name="Zhou Y."/>
            <person name="Yu Y."/>
            <person name="Zhang B."/>
            <person name="Zhuang S."/>
            <person name="Wei H."/>
            <person name="Liu B."/>
            <person name="Lei M."/>
            <person name="Yu H."/>
            <person name="Li Y."/>
            <person name="Xu H."/>
            <person name="Wei S."/>
            <person name="He X."/>
            <person name="Fang L."/>
            <person name="Zhang Z."/>
            <person name="Zhang Y."/>
            <person name="Huang X."/>
            <person name="Su Z."/>
            <person name="Tong W."/>
            <person name="Li J."/>
            <person name="Tong Z."/>
            <person name="Li S."/>
            <person name="Ye J."/>
            <person name="Wang L."/>
            <person name="Fang L."/>
            <person name="Lei T."/>
            <person name="Chen C.-S."/>
            <person name="Chen H.-C."/>
            <person name="Xu Z."/>
            <person name="Li H."/>
            <person name="Huang H."/>
            <person name="Zhang F."/>
            <person name="Xu H."/>
            <person name="Li N."/>
            <person name="Zhao C."/>
            <person name="Li S."/>
            <person name="Dong L."/>
            <person name="Huang Y."/>
            <person name="Li L."/>
            <person name="Xi Y."/>
            <person name="Qi Q."/>
            <person name="Li W."/>
            <person name="Zhang B."/>
            <person name="Hu W."/>
            <person name="Zhang Y."/>
            <person name="Tian X."/>
            <person name="Jiao Y."/>
            <person name="Liang X."/>
            <person name="Jin J."/>
            <person name="Gao L."/>
            <person name="Zheng W."/>
            <person name="Hao B."/>
            <person name="Liu S.-M."/>
            <person name="Wang W."/>
            <person name="Yuan L."/>
            <person name="Cao M."/>
            <person name="McDermott J."/>
            <person name="Samudrala R."/>
            <person name="Wang J."/>
            <person name="Wong G.K.-S."/>
            <person name="Yang H."/>
        </authorList>
    </citation>
    <scope>NUCLEOTIDE SEQUENCE [LARGE SCALE GENOMIC DNA]</scope>
    <source>
        <strain>cv. Nipponbare</strain>
    </source>
</reference>
<reference key="10">
    <citation type="journal article" date="2003" name="Science">
        <title>Collection, mapping, and annotation of over 28,000 cDNA clones from japonica rice.</title>
        <authorList>
            <consortium name="The rice full-length cDNA consortium"/>
        </authorList>
    </citation>
    <scope>NUCLEOTIDE SEQUENCE [LARGE SCALE MRNA]</scope>
    <source>
        <strain>cv. Nipponbare</strain>
    </source>
</reference>
<reference key="11">
    <citation type="journal article" date="2010" name="Carbohydr. Res.">
        <title>An arginyl residue in rice UDP-L-arabinopyranose mutase is required for catalytic activity and autoglycosylation.</title>
        <authorList>
            <person name="Konishi T."/>
            <person name="Ohnishi-Kameyama M."/>
            <person name="Funane K."/>
            <person name="Miyazaki Y."/>
            <person name="Konishi T."/>
            <person name="Ishii T."/>
        </authorList>
    </citation>
    <scope>PROTEIN SEQUENCE OF 152-165</scope>
    <scope>IDENTIFICATION BY MASS SPECTROMETRY</scope>
    <scope>FUNCTION</scope>
    <scope>CATALYTIC ACTIVITY</scope>
    <scope>DOMAIN</scope>
    <scope>GLYCOSYLATION AT ARG-158</scope>
    <scope>MUTAGENESIS OF ASP-112; ARG-151; ARG-158 AND ARG-165</scope>
</reference>
<reference key="12">
    <citation type="journal article" date="2002" name="Plant Physiol.">
        <title>Glucosylation activity and complex formation of two classes of reversibly glycosylated polypeptides.</title>
        <authorList>
            <person name="Langeveld S.M."/>
            <person name="Vennik M."/>
            <person name="Kottenhagen M."/>
            <person name="Van Wijk R."/>
            <person name="Buijk A."/>
            <person name="Kijne J.W."/>
            <person name="de Pater S."/>
        </authorList>
    </citation>
    <scope>FUNCTION</scope>
    <scope>SUBUNIT</scope>
    <scope>GLYCOSYLATION</scope>
</reference>
<reference key="13">
    <citation type="journal article" date="2007" name="Glycobiology">
        <title>A plant mutase that interconverts UDP-L-arabinofuranose and UDP-L-arabinopyranose.</title>
        <authorList>
            <person name="Konishi T."/>
            <person name="Takeda T."/>
            <person name="Miyazaki Y."/>
            <person name="Ohnishi-Kameyama M."/>
            <person name="Hayashi T."/>
            <person name="O'Neill M.A."/>
            <person name="Ishii T."/>
        </authorList>
    </citation>
    <scope>FUNCTION</scope>
    <scope>CATALYTIC ACTIVITY</scope>
    <scope>COFACTOR</scope>
    <scope>SUBUNIT</scope>
    <scope>GLYCOSYLATION</scope>
    <scope>IDENTIFICATION BY MASS SPECTROMETRY</scope>
</reference>
<reference key="14">
    <citation type="journal article" date="2010" name="Biosci. Biotechnol. Biochem.">
        <title>Purification and biochemical characterization of recombinant rice UDP-L-arabinopyranose mutase generated in insect cells.</title>
        <authorList>
            <person name="Konishi T."/>
            <person name="Miyazaki Y."/>
            <person name="Yamakawa S."/>
            <person name="Iwai H."/>
            <person name="Satoh S."/>
            <person name="Ishii T."/>
        </authorList>
    </citation>
    <scope>FUNCTION</scope>
    <scope>CATALYTIC ACTIVITY</scope>
    <scope>BIOPHYSICOCHEMICAL PROPERTIES</scope>
</reference>
<name>RGP1_ORYSJ</name>
<keyword id="KW-0961">Cell wall biogenesis/degradation</keyword>
<keyword id="KW-0903">Direct protein sequencing</keyword>
<keyword id="KW-0325">Glycoprotein</keyword>
<keyword id="KW-0333">Golgi apparatus</keyword>
<keyword id="KW-0413">Isomerase</keyword>
<keyword id="KW-1185">Reference proteome</keyword>
<accession>Q8H8T0</accession>
<accession>A0A0P0W0V3</accession>
<accession>O82705</accession>
<accession>Q10H67</accession>
<accession>Q9FUN9</accession>
<sequence length="364" mass="41349">MAGTVTVPSASVPSTPLLKDELDIVIPTIRNLDFLEMWRPFFQPYHLIIVQDGDPTKTIRVPEGFDYELYNRNDINRILGPKASCISFKDSACRCFGYMVSKKKYVFTIDDDCFVAKDPSGKDINALEQHIKNLLSPSTPFFFNTLYDPYREGADFVRGYPFSLREGAKTAVSHGLWLNIPDYDAPTQMVKPRERNSRYVDAVMTVPKGTLFPMCGMNLAFDRDLIGPAMYFGLMGDGQPIGRYDDMWAGWCMKVICDHLSLGVKTGLPYIWHSKASNPFVNLKKEYKGIFWQEDIIPFFQNATIPKECDTVQKCYLSLAEQVREKLGKIDPYFVKLADAMVTWIEAWDELNPSTAAVENGKAK</sequence>
<organism>
    <name type="scientific">Oryza sativa subsp. japonica</name>
    <name type="common">Rice</name>
    <dbReference type="NCBI Taxonomy" id="39947"/>
    <lineage>
        <taxon>Eukaryota</taxon>
        <taxon>Viridiplantae</taxon>
        <taxon>Streptophyta</taxon>
        <taxon>Embryophyta</taxon>
        <taxon>Tracheophyta</taxon>
        <taxon>Spermatophyta</taxon>
        <taxon>Magnoliopsida</taxon>
        <taxon>Liliopsida</taxon>
        <taxon>Poales</taxon>
        <taxon>Poaceae</taxon>
        <taxon>BOP clade</taxon>
        <taxon>Oryzoideae</taxon>
        <taxon>Oryzeae</taxon>
        <taxon>Oryzinae</taxon>
        <taxon>Oryza</taxon>
        <taxon>Oryza sativa</taxon>
    </lineage>
</organism>